<comment type="subunit">
    <text evidence="1">Part of the 50S ribosomal subunit. Contacts protein L32.</text>
</comment>
<comment type="similarity">
    <text evidence="1">Belongs to the bacterial ribosomal protein bL17 family.</text>
</comment>
<reference key="1">
    <citation type="journal article" date="2005" name="J. Bacteriol.">
        <title>Completion of the genome sequence of Brucella abortus and comparison to the highly similar genomes of Brucella melitensis and Brucella suis.</title>
        <authorList>
            <person name="Halling S.M."/>
            <person name="Peterson-Burch B.D."/>
            <person name="Bricker B.J."/>
            <person name="Zuerner R.L."/>
            <person name="Qing Z."/>
            <person name="Li L.-L."/>
            <person name="Kapur V."/>
            <person name="Alt D.P."/>
            <person name="Olsen S.C."/>
        </authorList>
    </citation>
    <scope>NUCLEOTIDE SEQUENCE [LARGE SCALE GENOMIC DNA]</scope>
    <source>
        <strain>9-941</strain>
    </source>
</reference>
<keyword id="KW-0687">Ribonucleoprotein</keyword>
<keyword id="KW-0689">Ribosomal protein</keyword>
<evidence type="ECO:0000255" key="1">
    <source>
        <dbReference type="HAMAP-Rule" id="MF_01368"/>
    </source>
</evidence>
<evidence type="ECO:0000305" key="2"/>
<proteinExistence type="inferred from homology"/>
<name>RL17_BRUAB</name>
<protein>
    <recommendedName>
        <fullName evidence="1">Large ribosomal subunit protein bL17</fullName>
    </recommendedName>
    <alternativeName>
        <fullName evidence="2">50S ribosomal protein L17</fullName>
    </alternativeName>
</protein>
<accession>Q57CT3</accession>
<dbReference type="EMBL" id="AE017223">
    <property type="protein sequence ID" value="AAX74551.1"/>
    <property type="molecule type" value="Genomic_DNA"/>
</dbReference>
<dbReference type="RefSeq" id="WP_002964337.1">
    <property type="nucleotide sequence ID" value="NC_006932.1"/>
</dbReference>
<dbReference type="SMR" id="Q57CT3"/>
<dbReference type="EnsemblBacteria" id="AAX74551">
    <property type="protein sequence ID" value="AAX74551"/>
    <property type="gene ID" value="BruAb1_1213"/>
</dbReference>
<dbReference type="GeneID" id="93016464"/>
<dbReference type="KEGG" id="bmb:BruAb1_1213"/>
<dbReference type="HOGENOM" id="CLU_074407_2_0_5"/>
<dbReference type="Proteomes" id="UP000000540">
    <property type="component" value="Chromosome I"/>
</dbReference>
<dbReference type="GO" id="GO:0022625">
    <property type="term" value="C:cytosolic large ribosomal subunit"/>
    <property type="evidence" value="ECO:0007669"/>
    <property type="project" value="TreeGrafter"/>
</dbReference>
<dbReference type="GO" id="GO:0003735">
    <property type="term" value="F:structural constituent of ribosome"/>
    <property type="evidence" value="ECO:0007669"/>
    <property type="project" value="InterPro"/>
</dbReference>
<dbReference type="GO" id="GO:0006412">
    <property type="term" value="P:translation"/>
    <property type="evidence" value="ECO:0007669"/>
    <property type="project" value="UniProtKB-UniRule"/>
</dbReference>
<dbReference type="FunFam" id="3.90.1030.10:FF:000001">
    <property type="entry name" value="50S ribosomal protein L17"/>
    <property type="match status" value="1"/>
</dbReference>
<dbReference type="Gene3D" id="3.90.1030.10">
    <property type="entry name" value="Ribosomal protein L17"/>
    <property type="match status" value="1"/>
</dbReference>
<dbReference type="HAMAP" id="MF_01368">
    <property type="entry name" value="Ribosomal_bL17"/>
    <property type="match status" value="1"/>
</dbReference>
<dbReference type="InterPro" id="IPR000456">
    <property type="entry name" value="Ribosomal_bL17"/>
</dbReference>
<dbReference type="InterPro" id="IPR047859">
    <property type="entry name" value="Ribosomal_bL17_CS"/>
</dbReference>
<dbReference type="InterPro" id="IPR036373">
    <property type="entry name" value="Ribosomal_bL17_sf"/>
</dbReference>
<dbReference type="NCBIfam" id="TIGR00059">
    <property type="entry name" value="L17"/>
    <property type="match status" value="1"/>
</dbReference>
<dbReference type="PANTHER" id="PTHR14413:SF16">
    <property type="entry name" value="LARGE RIBOSOMAL SUBUNIT PROTEIN BL17M"/>
    <property type="match status" value="1"/>
</dbReference>
<dbReference type="PANTHER" id="PTHR14413">
    <property type="entry name" value="RIBOSOMAL PROTEIN L17"/>
    <property type="match status" value="1"/>
</dbReference>
<dbReference type="Pfam" id="PF01196">
    <property type="entry name" value="Ribosomal_L17"/>
    <property type="match status" value="1"/>
</dbReference>
<dbReference type="SUPFAM" id="SSF64263">
    <property type="entry name" value="Prokaryotic ribosomal protein L17"/>
    <property type="match status" value="1"/>
</dbReference>
<dbReference type="PROSITE" id="PS01167">
    <property type="entry name" value="RIBOSOMAL_L17"/>
    <property type="match status" value="1"/>
</dbReference>
<gene>
    <name evidence="1" type="primary">rplQ</name>
    <name type="ordered locus">BruAb1_1213</name>
</gene>
<sequence length="142" mass="15636">MRHGNGYRKLNRTASHRKAMFANMAASLIEHEQIVTTLPKAKEIRPIVEKLVTLGKRGDLHARRQAISAIRDVRLVAKLFDTLAARYATRNGGYIRIMKAGFRAGDNAPLAVVEFVERDVDAKGKADRARVEAEAAAEADAA</sequence>
<feature type="chain" id="PRO_0000267839" description="Large ribosomal subunit protein bL17">
    <location>
        <begin position="1"/>
        <end position="142"/>
    </location>
</feature>
<organism>
    <name type="scientific">Brucella abortus biovar 1 (strain 9-941)</name>
    <dbReference type="NCBI Taxonomy" id="262698"/>
    <lineage>
        <taxon>Bacteria</taxon>
        <taxon>Pseudomonadati</taxon>
        <taxon>Pseudomonadota</taxon>
        <taxon>Alphaproteobacteria</taxon>
        <taxon>Hyphomicrobiales</taxon>
        <taxon>Brucellaceae</taxon>
        <taxon>Brucella/Ochrobactrum group</taxon>
        <taxon>Brucella</taxon>
    </lineage>
</organism>